<feature type="chain" id="PRO_1000190146" description="Glycerol-3-phosphate dehydrogenase [NAD(P)+]">
    <location>
        <begin position="1"/>
        <end position="339"/>
    </location>
</feature>
<feature type="active site" description="Proton acceptor" evidence="1">
    <location>
        <position position="195"/>
    </location>
</feature>
<feature type="binding site" evidence="1">
    <location>
        <position position="15"/>
    </location>
    <ligand>
        <name>NADPH</name>
        <dbReference type="ChEBI" id="CHEBI:57783"/>
    </ligand>
</feature>
<feature type="binding site" evidence="1">
    <location>
        <position position="16"/>
    </location>
    <ligand>
        <name>NADPH</name>
        <dbReference type="ChEBI" id="CHEBI:57783"/>
    </ligand>
</feature>
<feature type="binding site" evidence="1">
    <location>
        <position position="36"/>
    </location>
    <ligand>
        <name>NADPH</name>
        <dbReference type="ChEBI" id="CHEBI:57783"/>
    </ligand>
</feature>
<feature type="binding site" evidence="1">
    <location>
        <position position="110"/>
    </location>
    <ligand>
        <name>NADPH</name>
        <dbReference type="ChEBI" id="CHEBI:57783"/>
    </ligand>
</feature>
<feature type="binding site" evidence="1">
    <location>
        <position position="110"/>
    </location>
    <ligand>
        <name>sn-glycerol 3-phosphate</name>
        <dbReference type="ChEBI" id="CHEBI:57597"/>
    </ligand>
</feature>
<feature type="binding site" evidence="1">
    <location>
        <position position="139"/>
    </location>
    <ligand>
        <name>sn-glycerol 3-phosphate</name>
        <dbReference type="ChEBI" id="CHEBI:57597"/>
    </ligand>
</feature>
<feature type="binding site" evidence="1">
    <location>
        <position position="141"/>
    </location>
    <ligand>
        <name>sn-glycerol 3-phosphate</name>
        <dbReference type="ChEBI" id="CHEBI:57597"/>
    </ligand>
</feature>
<feature type="binding site" evidence="1">
    <location>
        <position position="143"/>
    </location>
    <ligand>
        <name>NADPH</name>
        <dbReference type="ChEBI" id="CHEBI:57783"/>
    </ligand>
</feature>
<feature type="binding site" evidence="1">
    <location>
        <position position="195"/>
    </location>
    <ligand>
        <name>sn-glycerol 3-phosphate</name>
        <dbReference type="ChEBI" id="CHEBI:57597"/>
    </ligand>
</feature>
<feature type="binding site" evidence="1">
    <location>
        <position position="248"/>
    </location>
    <ligand>
        <name>sn-glycerol 3-phosphate</name>
        <dbReference type="ChEBI" id="CHEBI:57597"/>
    </ligand>
</feature>
<feature type="binding site" evidence="1">
    <location>
        <position position="258"/>
    </location>
    <ligand>
        <name>sn-glycerol 3-phosphate</name>
        <dbReference type="ChEBI" id="CHEBI:57597"/>
    </ligand>
</feature>
<feature type="binding site" evidence="1">
    <location>
        <position position="259"/>
    </location>
    <ligand>
        <name>NADPH</name>
        <dbReference type="ChEBI" id="CHEBI:57783"/>
    </ligand>
</feature>
<feature type="binding site" evidence="1">
    <location>
        <position position="259"/>
    </location>
    <ligand>
        <name>sn-glycerol 3-phosphate</name>
        <dbReference type="ChEBI" id="CHEBI:57597"/>
    </ligand>
</feature>
<feature type="binding site" evidence="1">
    <location>
        <position position="260"/>
    </location>
    <ligand>
        <name>sn-glycerol 3-phosphate</name>
        <dbReference type="ChEBI" id="CHEBI:57597"/>
    </ligand>
</feature>
<feature type="binding site" evidence="1">
    <location>
        <position position="283"/>
    </location>
    <ligand>
        <name>NADPH</name>
        <dbReference type="ChEBI" id="CHEBI:57783"/>
    </ligand>
</feature>
<feature type="binding site" evidence="1">
    <location>
        <position position="285"/>
    </location>
    <ligand>
        <name>NADPH</name>
        <dbReference type="ChEBI" id="CHEBI:57783"/>
    </ligand>
</feature>
<accession>B7MFH2</accession>
<proteinExistence type="inferred from homology"/>
<name>GPDA_ECO45</name>
<sequence>MNQRNASMTVIGAGSYGTALAITLARNGHEVVLWGHDPEHIATLERDRCNAAFLPDVPFPDTLHLESDLATALAASRNILVVVPSHVFGEVLRQIKPLMRPDARLVWATKGLEAETGRLLQDVAREALGDQIPLAVISGPTFAKELAAGLPTAISLASTDQTFADDLQQLLHCGKSFRVYSNPDFIGVQLGGAVKNVIAIGAGMSDGIGFGANARTALITRGLAEMSRLGAALGADPATFMGMAGLGDLVLTCTDNQSRNRRFGMMLGQGMDVQSAQEKIGQVVEGYRNTKEVRELAHRFGVEMPITEEIYQVLYCGKNAREAALTLLGRARKDERSSH</sequence>
<reference key="1">
    <citation type="journal article" date="2009" name="PLoS Genet.">
        <title>Organised genome dynamics in the Escherichia coli species results in highly diverse adaptive paths.</title>
        <authorList>
            <person name="Touchon M."/>
            <person name="Hoede C."/>
            <person name="Tenaillon O."/>
            <person name="Barbe V."/>
            <person name="Baeriswyl S."/>
            <person name="Bidet P."/>
            <person name="Bingen E."/>
            <person name="Bonacorsi S."/>
            <person name="Bouchier C."/>
            <person name="Bouvet O."/>
            <person name="Calteau A."/>
            <person name="Chiapello H."/>
            <person name="Clermont O."/>
            <person name="Cruveiller S."/>
            <person name="Danchin A."/>
            <person name="Diard M."/>
            <person name="Dossat C."/>
            <person name="Karoui M.E."/>
            <person name="Frapy E."/>
            <person name="Garry L."/>
            <person name="Ghigo J.M."/>
            <person name="Gilles A.M."/>
            <person name="Johnson J."/>
            <person name="Le Bouguenec C."/>
            <person name="Lescat M."/>
            <person name="Mangenot S."/>
            <person name="Martinez-Jehanne V."/>
            <person name="Matic I."/>
            <person name="Nassif X."/>
            <person name="Oztas S."/>
            <person name="Petit M.A."/>
            <person name="Pichon C."/>
            <person name="Rouy Z."/>
            <person name="Ruf C.S."/>
            <person name="Schneider D."/>
            <person name="Tourret J."/>
            <person name="Vacherie B."/>
            <person name="Vallenet D."/>
            <person name="Medigue C."/>
            <person name="Rocha E.P.C."/>
            <person name="Denamur E."/>
        </authorList>
    </citation>
    <scope>NUCLEOTIDE SEQUENCE [LARGE SCALE GENOMIC DNA]</scope>
    <source>
        <strain>S88 / ExPEC</strain>
    </source>
</reference>
<dbReference type="EC" id="1.1.1.94" evidence="1"/>
<dbReference type="EMBL" id="CU928161">
    <property type="protein sequence ID" value="CAR05234.1"/>
    <property type="molecule type" value="Genomic_DNA"/>
</dbReference>
<dbReference type="RefSeq" id="WP_001076194.1">
    <property type="nucleotide sequence ID" value="NC_011742.1"/>
</dbReference>
<dbReference type="SMR" id="B7MFH2"/>
<dbReference type="GeneID" id="93778322"/>
<dbReference type="KEGG" id="ecz:ECS88_4025"/>
<dbReference type="HOGENOM" id="CLU_033449_0_2_6"/>
<dbReference type="UniPathway" id="UPA00940"/>
<dbReference type="Proteomes" id="UP000000747">
    <property type="component" value="Chromosome"/>
</dbReference>
<dbReference type="GO" id="GO:0005829">
    <property type="term" value="C:cytosol"/>
    <property type="evidence" value="ECO:0007669"/>
    <property type="project" value="TreeGrafter"/>
</dbReference>
<dbReference type="GO" id="GO:0047952">
    <property type="term" value="F:glycerol-3-phosphate dehydrogenase [NAD(P)+] activity"/>
    <property type="evidence" value="ECO:0007669"/>
    <property type="project" value="UniProtKB-UniRule"/>
</dbReference>
<dbReference type="GO" id="GO:0051287">
    <property type="term" value="F:NAD binding"/>
    <property type="evidence" value="ECO:0007669"/>
    <property type="project" value="InterPro"/>
</dbReference>
<dbReference type="GO" id="GO:0005975">
    <property type="term" value="P:carbohydrate metabolic process"/>
    <property type="evidence" value="ECO:0007669"/>
    <property type="project" value="InterPro"/>
</dbReference>
<dbReference type="GO" id="GO:0046167">
    <property type="term" value="P:glycerol-3-phosphate biosynthetic process"/>
    <property type="evidence" value="ECO:0007669"/>
    <property type="project" value="UniProtKB-UniRule"/>
</dbReference>
<dbReference type="GO" id="GO:0046168">
    <property type="term" value="P:glycerol-3-phosphate catabolic process"/>
    <property type="evidence" value="ECO:0007669"/>
    <property type="project" value="InterPro"/>
</dbReference>
<dbReference type="GO" id="GO:0046474">
    <property type="term" value="P:glycerophospholipid biosynthetic process"/>
    <property type="evidence" value="ECO:0007669"/>
    <property type="project" value="TreeGrafter"/>
</dbReference>
<dbReference type="FunFam" id="1.10.1040.10:FF:000001">
    <property type="entry name" value="Glycerol-3-phosphate dehydrogenase [NAD(P)+]"/>
    <property type="match status" value="1"/>
</dbReference>
<dbReference type="FunFam" id="3.40.50.720:FF:000019">
    <property type="entry name" value="Glycerol-3-phosphate dehydrogenase [NAD(P)+]"/>
    <property type="match status" value="1"/>
</dbReference>
<dbReference type="Gene3D" id="1.10.1040.10">
    <property type="entry name" value="N-(1-d-carboxylethyl)-l-norvaline Dehydrogenase, domain 2"/>
    <property type="match status" value="1"/>
</dbReference>
<dbReference type="Gene3D" id="3.40.50.720">
    <property type="entry name" value="NAD(P)-binding Rossmann-like Domain"/>
    <property type="match status" value="1"/>
</dbReference>
<dbReference type="HAMAP" id="MF_00394">
    <property type="entry name" value="NAD_Glyc3P_dehydrog"/>
    <property type="match status" value="1"/>
</dbReference>
<dbReference type="InterPro" id="IPR008927">
    <property type="entry name" value="6-PGluconate_DH-like_C_sf"/>
</dbReference>
<dbReference type="InterPro" id="IPR013328">
    <property type="entry name" value="6PGD_dom2"/>
</dbReference>
<dbReference type="InterPro" id="IPR006168">
    <property type="entry name" value="G3P_DH_NAD-dep"/>
</dbReference>
<dbReference type="InterPro" id="IPR006109">
    <property type="entry name" value="G3P_DH_NAD-dep_C"/>
</dbReference>
<dbReference type="InterPro" id="IPR011128">
    <property type="entry name" value="G3P_DH_NAD-dep_N"/>
</dbReference>
<dbReference type="InterPro" id="IPR036291">
    <property type="entry name" value="NAD(P)-bd_dom_sf"/>
</dbReference>
<dbReference type="NCBIfam" id="NF000939">
    <property type="entry name" value="PRK00094.1-1"/>
    <property type="match status" value="1"/>
</dbReference>
<dbReference type="NCBIfam" id="NF000940">
    <property type="entry name" value="PRK00094.1-2"/>
    <property type="match status" value="1"/>
</dbReference>
<dbReference type="NCBIfam" id="NF000942">
    <property type="entry name" value="PRK00094.1-4"/>
    <property type="match status" value="1"/>
</dbReference>
<dbReference type="PANTHER" id="PTHR11728">
    <property type="entry name" value="GLYCEROL-3-PHOSPHATE DEHYDROGENASE"/>
    <property type="match status" value="1"/>
</dbReference>
<dbReference type="PANTHER" id="PTHR11728:SF1">
    <property type="entry name" value="GLYCEROL-3-PHOSPHATE DEHYDROGENASE [NAD(+)] 2, CHLOROPLASTIC"/>
    <property type="match status" value="1"/>
</dbReference>
<dbReference type="Pfam" id="PF07479">
    <property type="entry name" value="NAD_Gly3P_dh_C"/>
    <property type="match status" value="1"/>
</dbReference>
<dbReference type="Pfam" id="PF01210">
    <property type="entry name" value="NAD_Gly3P_dh_N"/>
    <property type="match status" value="1"/>
</dbReference>
<dbReference type="PIRSF" id="PIRSF000114">
    <property type="entry name" value="Glycerol-3-P_dh"/>
    <property type="match status" value="1"/>
</dbReference>
<dbReference type="PRINTS" id="PR00077">
    <property type="entry name" value="GPDHDRGNASE"/>
</dbReference>
<dbReference type="SUPFAM" id="SSF48179">
    <property type="entry name" value="6-phosphogluconate dehydrogenase C-terminal domain-like"/>
    <property type="match status" value="1"/>
</dbReference>
<dbReference type="SUPFAM" id="SSF51735">
    <property type="entry name" value="NAD(P)-binding Rossmann-fold domains"/>
    <property type="match status" value="1"/>
</dbReference>
<dbReference type="PROSITE" id="PS00957">
    <property type="entry name" value="NAD_G3PDH"/>
    <property type="match status" value="1"/>
</dbReference>
<protein>
    <recommendedName>
        <fullName evidence="1">Glycerol-3-phosphate dehydrogenase [NAD(P)+]</fullName>
        <ecNumber evidence="1">1.1.1.94</ecNumber>
    </recommendedName>
    <alternativeName>
        <fullName evidence="1">NAD(P)(+)-dependent glycerol-3-phosphate dehydrogenase</fullName>
    </alternativeName>
    <alternativeName>
        <fullName evidence="1">NAD(P)H-dependent dihydroxyacetone-phosphate reductase</fullName>
    </alternativeName>
</protein>
<organism>
    <name type="scientific">Escherichia coli O45:K1 (strain S88 / ExPEC)</name>
    <dbReference type="NCBI Taxonomy" id="585035"/>
    <lineage>
        <taxon>Bacteria</taxon>
        <taxon>Pseudomonadati</taxon>
        <taxon>Pseudomonadota</taxon>
        <taxon>Gammaproteobacteria</taxon>
        <taxon>Enterobacterales</taxon>
        <taxon>Enterobacteriaceae</taxon>
        <taxon>Escherichia</taxon>
    </lineage>
</organism>
<comment type="function">
    <text evidence="1">Catalyzes the reduction of the glycolytic intermediate dihydroxyacetone phosphate (DHAP) to sn-glycerol 3-phosphate (G3P), the key precursor for phospholipid synthesis.</text>
</comment>
<comment type="catalytic activity">
    <reaction evidence="1">
        <text>sn-glycerol 3-phosphate + NAD(+) = dihydroxyacetone phosphate + NADH + H(+)</text>
        <dbReference type="Rhea" id="RHEA:11092"/>
        <dbReference type="ChEBI" id="CHEBI:15378"/>
        <dbReference type="ChEBI" id="CHEBI:57540"/>
        <dbReference type="ChEBI" id="CHEBI:57597"/>
        <dbReference type="ChEBI" id="CHEBI:57642"/>
        <dbReference type="ChEBI" id="CHEBI:57945"/>
        <dbReference type="EC" id="1.1.1.94"/>
    </reaction>
    <physiologicalReaction direction="right-to-left" evidence="1">
        <dbReference type="Rhea" id="RHEA:11094"/>
    </physiologicalReaction>
</comment>
<comment type="catalytic activity">
    <reaction evidence="1">
        <text>sn-glycerol 3-phosphate + NADP(+) = dihydroxyacetone phosphate + NADPH + H(+)</text>
        <dbReference type="Rhea" id="RHEA:11096"/>
        <dbReference type="ChEBI" id="CHEBI:15378"/>
        <dbReference type="ChEBI" id="CHEBI:57597"/>
        <dbReference type="ChEBI" id="CHEBI:57642"/>
        <dbReference type="ChEBI" id="CHEBI:57783"/>
        <dbReference type="ChEBI" id="CHEBI:58349"/>
        <dbReference type="EC" id="1.1.1.94"/>
    </reaction>
    <physiologicalReaction direction="right-to-left" evidence="1">
        <dbReference type="Rhea" id="RHEA:11098"/>
    </physiologicalReaction>
</comment>
<comment type="pathway">
    <text evidence="1">Membrane lipid metabolism; glycerophospholipid metabolism.</text>
</comment>
<comment type="subcellular location">
    <subcellularLocation>
        <location evidence="1">Cytoplasm</location>
    </subcellularLocation>
</comment>
<comment type="similarity">
    <text evidence="1">Belongs to the NAD-dependent glycerol-3-phosphate dehydrogenase family.</text>
</comment>
<gene>
    <name evidence="1" type="primary">gpsA</name>
    <name type="ordered locus">ECS88_4025</name>
</gene>
<evidence type="ECO:0000255" key="1">
    <source>
        <dbReference type="HAMAP-Rule" id="MF_00394"/>
    </source>
</evidence>
<keyword id="KW-0963">Cytoplasm</keyword>
<keyword id="KW-0444">Lipid biosynthesis</keyword>
<keyword id="KW-0443">Lipid metabolism</keyword>
<keyword id="KW-0520">NAD</keyword>
<keyword id="KW-0521">NADP</keyword>
<keyword id="KW-0547">Nucleotide-binding</keyword>
<keyword id="KW-0560">Oxidoreductase</keyword>
<keyword id="KW-0594">Phospholipid biosynthesis</keyword>
<keyword id="KW-1208">Phospholipid metabolism</keyword>
<keyword id="KW-1185">Reference proteome</keyword>